<accession>O66473</accession>
<name>SPEE1_AQUAE</name>
<dbReference type="EC" id="2.5.1.16" evidence="1"/>
<dbReference type="EMBL" id="AE000657">
    <property type="protein sequence ID" value="AAC06436.1"/>
    <property type="molecule type" value="Genomic_DNA"/>
</dbReference>
<dbReference type="PIR" id="F70305">
    <property type="entry name" value="F70305"/>
</dbReference>
<dbReference type="RefSeq" id="NP_213033.1">
    <property type="nucleotide sequence ID" value="NC_000918.1"/>
</dbReference>
<dbReference type="RefSeq" id="WP_010879971.1">
    <property type="nucleotide sequence ID" value="NC_000918.1"/>
</dbReference>
<dbReference type="SMR" id="O66473"/>
<dbReference type="FunCoup" id="O66473">
    <property type="interactions" value="350"/>
</dbReference>
<dbReference type="STRING" id="224324.aq_062"/>
<dbReference type="EnsemblBacteria" id="AAC06436">
    <property type="protein sequence ID" value="AAC06436"/>
    <property type="gene ID" value="aq_062"/>
</dbReference>
<dbReference type="KEGG" id="aae:aq_062"/>
<dbReference type="PATRIC" id="fig|224324.8.peg.50"/>
<dbReference type="eggNOG" id="COG0421">
    <property type="taxonomic scope" value="Bacteria"/>
</dbReference>
<dbReference type="HOGENOM" id="CLU_048199_1_0_0"/>
<dbReference type="InParanoid" id="O66473"/>
<dbReference type="OrthoDB" id="9793120at2"/>
<dbReference type="UniPathway" id="UPA00248">
    <property type="reaction ID" value="UER00314"/>
</dbReference>
<dbReference type="Proteomes" id="UP000000798">
    <property type="component" value="Chromosome"/>
</dbReference>
<dbReference type="GO" id="GO:0005829">
    <property type="term" value="C:cytosol"/>
    <property type="evidence" value="ECO:0000318"/>
    <property type="project" value="GO_Central"/>
</dbReference>
<dbReference type="GO" id="GO:0004766">
    <property type="term" value="F:spermidine synthase activity"/>
    <property type="evidence" value="ECO:0000318"/>
    <property type="project" value="GO_Central"/>
</dbReference>
<dbReference type="GO" id="GO:0008295">
    <property type="term" value="P:spermidine biosynthetic process"/>
    <property type="evidence" value="ECO:0000318"/>
    <property type="project" value="GO_Central"/>
</dbReference>
<dbReference type="CDD" id="cd02440">
    <property type="entry name" value="AdoMet_MTases"/>
    <property type="match status" value="1"/>
</dbReference>
<dbReference type="FunFam" id="3.40.50.150:FF:000056">
    <property type="entry name" value="Polyamine aminopropyltransferase"/>
    <property type="match status" value="1"/>
</dbReference>
<dbReference type="FunFam" id="2.30.140.10:FF:000023">
    <property type="entry name" value="Polyamine aminopropyltransferase 1"/>
    <property type="match status" value="1"/>
</dbReference>
<dbReference type="Gene3D" id="2.30.140.10">
    <property type="entry name" value="Spermidine synthase, tetramerisation domain"/>
    <property type="match status" value="1"/>
</dbReference>
<dbReference type="Gene3D" id="3.40.50.150">
    <property type="entry name" value="Vaccinia Virus protein VP39"/>
    <property type="match status" value="1"/>
</dbReference>
<dbReference type="HAMAP" id="MF_00198">
    <property type="entry name" value="Spermidine_synth"/>
    <property type="match status" value="1"/>
</dbReference>
<dbReference type="InterPro" id="IPR030374">
    <property type="entry name" value="PABS"/>
</dbReference>
<dbReference type="InterPro" id="IPR030373">
    <property type="entry name" value="PABS_CS"/>
</dbReference>
<dbReference type="InterPro" id="IPR029063">
    <property type="entry name" value="SAM-dependent_MTases_sf"/>
</dbReference>
<dbReference type="InterPro" id="IPR001045">
    <property type="entry name" value="Spermi_synthase"/>
</dbReference>
<dbReference type="InterPro" id="IPR035246">
    <property type="entry name" value="Spermidine_synt_N"/>
</dbReference>
<dbReference type="InterPro" id="IPR037163">
    <property type="entry name" value="Spermidine_synt_N_sf"/>
</dbReference>
<dbReference type="NCBIfam" id="NF037959">
    <property type="entry name" value="MFS_SpdSyn"/>
    <property type="match status" value="1"/>
</dbReference>
<dbReference type="NCBIfam" id="NF002010">
    <property type="entry name" value="PRK00811.1"/>
    <property type="match status" value="1"/>
</dbReference>
<dbReference type="NCBIfam" id="TIGR00417">
    <property type="entry name" value="speE"/>
    <property type="match status" value="1"/>
</dbReference>
<dbReference type="PANTHER" id="PTHR11558:SF11">
    <property type="entry name" value="SPERMIDINE SYNTHASE"/>
    <property type="match status" value="1"/>
</dbReference>
<dbReference type="PANTHER" id="PTHR11558">
    <property type="entry name" value="SPERMIDINE/SPERMINE SYNTHASE"/>
    <property type="match status" value="1"/>
</dbReference>
<dbReference type="Pfam" id="PF17284">
    <property type="entry name" value="Spermine_synt_N"/>
    <property type="match status" value="1"/>
</dbReference>
<dbReference type="Pfam" id="PF01564">
    <property type="entry name" value="Spermine_synth"/>
    <property type="match status" value="1"/>
</dbReference>
<dbReference type="SUPFAM" id="SSF53335">
    <property type="entry name" value="S-adenosyl-L-methionine-dependent methyltransferases"/>
    <property type="match status" value="1"/>
</dbReference>
<dbReference type="PROSITE" id="PS01330">
    <property type="entry name" value="PABS_1"/>
    <property type="match status" value="1"/>
</dbReference>
<dbReference type="PROSITE" id="PS51006">
    <property type="entry name" value="PABS_2"/>
    <property type="match status" value="1"/>
</dbReference>
<organism>
    <name type="scientific">Aquifex aeolicus (strain VF5)</name>
    <dbReference type="NCBI Taxonomy" id="224324"/>
    <lineage>
        <taxon>Bacteria</taxon>
        <taxon>Pseudomonadati</taxon>
        <taxon>Aquificota</taxon>
        <taxon>Aquificia</taxon>
        <taxon>Aquificales</taxon>
        <taxon>Aquificaceae</taxon>
        <taxon>Aquifex</taxon>
    </lineage>
</organism>
<feature type="chain" id="PRO_0000156463" description="Polyamine aminopropyltransferase 1">
    <location>
        <begin position="1"/>
        <end position="280"/>
    </location>
</feature>
<feature type="domain" description="PABS" evidence="1">
    <location>
        <begin position="3"/>
        <end position="237"/>
    </location>
</feature>
<feature type="active site" description="Proton acceptor" evidence="1">
    <location>
        <position position="157"/>
    </location>
</feature>
<feature type="binding site" evidence="1">
    <location>
        <position position="33"/>
    </location>
    <ligand>
        <name>S-methyl-5'-thioadenosine</name>
        <dbReference type="ChEBI" id="CHEBI:17509"/>
    </ligand>
</feature>
<feature type="binding site" evidence="1">
    <location>
        <position position="64"/>
    </location>
    <ligand>
        <name>spermidine</name>
        <dbReference type="ChEBI" id="CHEBI:57834"/>
    </ligand>
</feature>
<feature type="binding site" evidence="1">
    <location>
        <position position="88"/>
    </location>
    <ligand>
        <name>spermidine</name>
        <dbReference type="ChEBI" id="CHEBI:57834"/>
    </ligand>
</feature>
<feature type="binding site" evidence="1">
    <location>
        <position position="108"/>
    </location>
    <ligand>
        <name>S-methyl-5'-thioadenosine</name>
        <dbReference type="ChEBI" id="CHEBI:17509"/>
    </ligand>
</feature>
<feature type="binding site" evidence="1">
    <location>
        <begin position="139"/>
        <end position="140"/>
    </location>
    <ligand>
        <name>S-methyl-5'-thioadenosine</name>
        <dbReference type="ChEBI" id="CHEBI:17509"/>
    </ligand>
</feature>
<feature type="binding site" evidence="1">
    <location>
        <begin position="157"/>
        <end position="160"/>
    </location>
    <ligand>
        <name>spermidine</name>
        <dbReference type="ChEBI" id="CHEBI:57834"/>
    </ligand>
</feature>
<comment type="function">
    <text evidence="1">Catalyzes the irreversible transfer of a propylamine group from the amino donor S-adenosylmethioninamine (decarboxy-AdoMet) to putrescine (1,4-diaminobutane) to yield spermidine.</text>
</comment>
<comment type="catalytic activity">
    <reaction evidence="1">
        <text>S-adenosyl 3-(methylsulfanyl)propylamine + putrescine = S-methyl-5'-thioadenosine + spermidine + H(+)</text>
        <dbReference type="Rhea" id="RHEA:12721"/>
        <dbReference type="ChEBI" id="CHEBI:15378"/>
        <dbReference type="ChEBI" id="CHEBI:17509"/>
        <dbReference type="ChEBI" id="CHEBI:57443"/>
        <dbReference type="ChEBI" id="CHEBI:57834"/>
        <dbReference type="ChEBI" id="CHEBI:326268"/>
        <dbReference type="EC" id="2.5.1.16"/>
    </reaction>
</comment>
<comment type="pathway">
    <text evidence="1">Amine and polyamine biosynthesis; spermidine biosynthesis; spermidine from putrescine: step 1/1.</text>
</comment>
<comment type="subunit">
    <text evidence="1">Homodimer or homotetramer.</text>
</comment>
<comment type="subcellular location">
    <subcellularLocation>
        <location evidence="1">Cytoplasm</location>
    </subcellularLocation>
</comment>
<comment type="similarity">
    <text evidence="1">Belongs to the spermidine/spermine synthase family.</text>
</comment>
<keyword id="KW-0963">Cytoplasm</keyword>
<keyword id="KW-0620">Polyamine biosynthesis</keyword>
<keyword id="KW-1185">Reference proteome</keyword>
<keyword id="KW-0745">Spermidine biosynthesis</keyword>
<keyword id="KW-0808">Transferase</keyword>
<reference key="1">
    <citation type="journal article" date="1998" name="Nature">
        <title>The complete genome of the hyperthermophilic bacterium Aquifex aeolicus.</title>
        <authorList>
            <person name="Deckert G."/>
            <person name="Warren P.V."/>
            <person name="Gaasterland T."/>
            <person name="Young W.G."/>
            <person name="Lenox A.L."/>
            <person name="Graham D.E."/>
            <person name="Overbeek R."/>
            <person name="Snead M.A."/>
            <person name="Keller M."/>
            <person name="Aujay M."/>
            <person name="Huber R."/>
            <person name="Feldman R.A."/>
            <person name="Short J.M."/>
            <person name="Olsen G.J."/>
            <person name="Swanson R.V."/>
        </authorList>
    </citation>
    <scope>NUCLEOTIDE SEQUENCE [LARGE SCALE GENOMIC DNA]</scope>
    <source>
        <strain>VF5</strain>
    </source>
</reference>
<sequence length="280" mass="32594">MRDIVFIERDPYAPIRHCYTVSKILYQGKSPYQEIQVIESPEFGRMLILDGVVQLDEKYEFLYHEYLAHVPLHAHPNPRNVLIIGGGDGGTLREVLKHDIVERAVLVDIDKEVIEVSKKYLPTLSVGFQDPRAIVVNEDGYKYVQDYENEFDVIIVDSTDPVGFAHVLTTEDFFRHVYKALKEDGIFVAQTESIHYHLEMVSNIQQRLKKVFPIVDLYTSVIPIYAGYWWTFSIASKKYPVRTPAREVKVQTKIYDADMHEYAFLPESFYNKIVNGEYKY</sequence>
<protein>
    <recommendedName>
        <fullName evidence="1">Polyamine aminopropyltransferase 1</fullName>
    </recommendedName>
    <alternativeName>
        <fullName evidence="1">Putrescine aminopropyltransferase 1</fullName>
        <shortName evidence="1">PAPT 1</shortName>
    </alternativeName>
    <alternativeName>
        <fullName evidence="1">Spermidine synthase 1</fullName>
        <shortName evidence="1">SPDS 1</shortName>
        <shortName evidence="1">SPDSY 1</shortName>
        <ecNumber evidence="1">2.5.1.16</ecNumber>
    </alternativeName>
</protein>
<evidence type="ECO:0000255" key="1">
    <source>
        <dbReference type="HAMAP-Rule" id="MF_00198"/>
    </source>
</evidence>
<gene>
    <name evidence="1" type="primary">speE1</name>
    <name type="synonym">speE</name>
    <name type="ordered locus">aq_062</name>
</gene>
<proteinExistence type="inferred from homology"/>